<dbReference type="EMBL" id="AL157959">
    <property type="protein sequence ID" value="CAM09261.1"/>
    <property type="molecule type" value="Genomic_DNA"/>
</dbReference>
<dbReference type="RefSeq" id="WP_002212306.1">
    <property type="nucleotide sequence ID" value="NC_003116.1"/>
</dbReference>
<dbReference type="SMR" id="P66225"/>
<dbReference type="EnsemblBacteria" id="CAM09261">
    <property type="protein sequence ID" value="CAM09261"/>
    <property type="gene ID" value="NMA2165"/>
</dbReference>
<dbReference type="GeneID" id="93387413"/>
<dbReference type="KEGG" id="nma:NMA2165"/>
<dbReference type="HOGENOM" id="CLU_190949_1_1_4"/>
<dbReference type="Proteomes" id="UP000000626">
    <property type="component" value="Chromosome"/>
</dbReference>
<dbReference type="GO" id="GO:0022625">
    <property type="term" value="C:cytosolic large ribosomal subunit"/>
    <property type="evidence" value="ECO:0007669"/>
    <property type="project" value="TreeGrafter"/>
</dbReference>
<dbReference type="GO" id="GO:0003735">
    <property type="term" value="F:structural constituent of ribosome"/>
    <property type="evidence" value="ECO:0007669"/>
    <property type="project" value="InterPro"/>
</dbReference>
<dbReference type="GO" id="GO:0006412">
    <property type="term" value="P:translation"/>
    <property type="evidence" value="ECO:0007669"/>
    <property type="project" value="UniProtKB-UniRule"/>
</dbReference>
<dbReference type="FunFam" id="2.20.28.120:FF:000001">
    <property type="entry name" value="50S ribosomal protein L33"/>
    <property type="match status" value="1"/>
</dbReference>
<dbReference type="Gene3D" id="2.20.28.120">
    <property type="entry name" value="Ribosomal protein L33"/>
    <property type="match status" value="1"/>
</dbReference>
<dbReference type="HAMAP" id="MF_00294">
    <property type="entry name" value="Ribosomal_bL33"/>
    <property type="match status" value="1"/>
</dbReference>
<dbReference type="InterPro" id="IPR001705">
    <property type="entry name" value="Ribosomal_bL33"/>
</dbReference>
<dbReference type="InterPro" id="IPR018264">
    <property type="entry name" value="Ribosomal_bL33_CS"/>
</dbReference>
<dbReference type="InterPro" id="IPR038584">
    <property type="entry name" value="Ribosomal_bL33_sf"/>
</dbReference>
<dbReference type="InterPro" id="IPR011332">
    <property type="entry name" value="Ribosomal_zn-bd"/>
</dbReference>
<dbReference type="NCBIfam" id="NF001764">
    <property type="entry name" value="PRK00504.1"/>
    <property type="match status" value="1"/>
</dbReference>
<dbReference type="NCBIfam" id="NF001860">
    <property type="entry name" value="PRK00595.1"/>
    <property type="match status" value="1"/>
</dbReference>
<dbReference type="NCBIfam" id="TIGR01023">
    <property type="entry name" value="rpmG_bact"/>
    <property type="match status" value="1"/>
</dbReference>
<dbReference type="PANTHER" id="PTHR15238">
    <property type="entry name" value="54S RIBOSOMAL PROTEIN L39, MITOCHONDRIAL"/>
    <property type="match status" value="1"/>
</dbReference>
<dbReference type="PANTHER" id="PTHR15238:SF1">
    <property type="entry name" value="LARGE RIBOSOMAL SUBUNIT PROTEIN BL33M"/>
    <property type="match status" value="1"/>
</dbReference>
<dbReference type="Pfam" id="PF00471">
    <property type="entry name" value="Ribosomal_L33"/>
    <property type="match status" value="1"/>
</dbReference>
<dbReference type="SUPFAM" id="SSF57829">
    <property type="entry name" value="Zn-binding ribosomal proteins"/>
    <property type="match status" value="1"/>
</dbReference>
<dbReference type="PROSITE" id="PS00582">
    <property type="entry name" value="RIBOSOMAL_L33"/>
    <property type="match status" value="1"/>
</dbReference>
<gene>
    <name type="primary">rpmG</name>
    <name type="ordered locus">NMA2165</name>
</gene>
<sequence>MRDKIKLESSAGTGHFYTTTKNKRTMPGKLEIKKFDPVARKHVVYKETKLK</sequence>
<organism>
    <name type="scientific">Neisseria meningitidis serogroup A / serotype 4A (strain DSM 15465 / Z2491)</name>
    <dbReference type="NCBI Taxonomy" id="122587"/>
    <lineage>
        <taxon>Bacteria</taxon>
        <taxon>Pseudomonadati</taxon>
        <taxon>Pseudomonadota</taxon>
        <taxon>Betaproteobacteria</taxon>
        <taxon>Neisseriales</taxon>
        <taxon>Neisseriaceae</taxon>
        <taxon>Neisseria</taxon>
    </lineage>
</organism>
<keyword id="KW-0687">Ribonucleoprotein</keyword>
<keyword id="KW-0689">Ribosomal protein</keyword>
<comment type="similarity">
    <text evidence="2">Belongs to the bacterial ribosomal protein bL33 family.</text>
</comment>
<protein>
    <recommendedName>
        <fullName evidence="2">Large ribosomal subunit protein bL33</fullName>
    </recommendedName>
    <alternativeName>
        <fullName>50S ribosomal protein L33</fullName>
    </alternativeName>
</protein>
<feature type="chain" id="PRO_0000170196" description="Large ribosomal subunit protein bL33">
    <location>
        <begin position="1"/>
        <end position="51"/>
    </location>
</feature>
<feature type="region of interest" description="Disordered" evidence="1">
    <location>
        <begin position="1"/>
        <end position="21"/>
    </location>
</feature>
<feature type="compositionally biased region" description="Polar residues" evidence="1">
    <location>
        <begin position="10"/>
        <end position="20"/>
    </location>
</feature>
<proteinExistence type="inferred from homology"/>
<accession>P66225</accession>
<accession>A1ITZ2</accession>
<accession>Q9JQX1</accession>
<name>RL33_NEIMA</name>
<reference key="1">
    <citation type="journal article" date="2000" name="Nature">
        <title>Complete DNA sequence of a serogroup A strain of Neisseria meningitidis Z2491.</title>
        <authorList>
            <person name="Parkhill J."/>
            <person name="Achtman M."/>
            <person name="James K.D."/>
            <person name="Bentley S.D."/>
            <person name="Churcher C.M."/>
            <person name="Klee S.R."/>
            <person name="Morelli G."/>
            <person name="Basham D."/>
            <person name="Brown D."/>
            <person name="Chillingworth T."/>
            <person name="Davies R.M."/>
            <person name="Davis P."/>
            <person name="Devlin K."/>
            <person name="Feltwell T."/>
            <person name="Hamlin N."/>
            <person name="Holroyd S."/>
            <person name="Jagels K."/>
            <person name="Leather S."/>
            <person name="Moule S."/>
            <person name="Mungall K.L."/>
            <person name="Quail M.A."/>
            <person name="Rajandream M.A."/>
            <person name="Rutherford K.M."/>
            <person name="Simmonds M."/>
            <person name="Skelton J."/>
            <person name="Whitehead S."/>
            <person name="Spratt B.G."/>
            <person name="Barrell B.G."/>
        </authorList>
    </citation>
    <scope>NUCLEOTIDE SEQUENCE [LARGE SCALE GENOMIC DNA]</scope>
    <source>
        <strain>DSM 15465 / Z2491</strain>
    </source>
</reference>
<evidence type="ECO:0000256" key="1">
    <source>
        <dbReference type="SAM" id="MobiDB-lite"/>
    </source>
</evidence>
<evidence type="ECO:0000305" key="2"/>